<protein>
    <recommendedName>
        <fullName evidence="1">Exodeoxyribonuclease 7 small subunit</fullName>
        <ecNumber evidence="1">3.1.11.6</ecNumber>
    </recommendedName>
    <alternativeName>
        <fullName evidence="1">Exodeoxyribonuclease VII small subunit</fullName>
        <shortName evidence="1">Exonuclease VII small subunit</shortName>
    </alternativeName>
</protein>
<name>EX7S_STRP8</name>
<evidence type="ECO:0000255" key="1">
    <source>
        <dbReference type="HAMAP-Rule" id="MF_00337"/>
    </source>
</evidence>
<dbReference type="EC" id="3.1.11.6" evidence="1"/>
<dbReference type="EMBL" id="AE009949">
    <property type="protein sequence ID" value="AAL98088.1"/>
    <property type="molecule type" value="Genomic_DNA"/>
</dbReference>
<dbReference type="RefSeq" id="WP_002983901.1">
    <property type="nucleotide sequence ID" value="NC_003485.1"/>
</dbReference>
<dbReference type="SMR" id="P67469"/>
<dbReference type="KEGG" id="spm:spyM18_1517"/>
<dbReference type="HOGENOM" id="CLU_145918_3_2_9"/>
<dbReference type="GO" id="GO:0005829">
    <property type="term" value="C:cytosol"/>
    <property type="evidence" value="ECO:0007669"/>
    <property type="project" value="TreeGrafter"/>
</dbReference>
<dbReference type="GO" id="GO:0009318">
    <property type="term" value="C:exodeoxyribonuclease VII complex"/>
    <property type="evidence" value="ECO:0007669"/>
    <property type="project" value="InterPro"/>
</dbReference>
<dbReference type="GO" id="GO:0008855">
    <property type="term" value="F:exodeoxyribonuclease VII activity"/>
    <property type="evidence" value="ECO:0007669"/>
    <property type="project" value="UniProtKB-UniRule"/>
</dbReference>
<dbReference type="GO" id="GO:0006308">
    <property type="term" value="P:DNA catabolic process"/>
    <property type="evidence" value="ECO:0007669"/>
    <property type="project" value="UniProtKB-UniRule"/>
</dbReference>
<dbReference type="Gene3D" id="1.10.287.1040">
    <property type="entry name" value="Exonuclease VII, small subunit"/>
    <property type="match status" value="1"/>
</dbReference>
<dbReference type="HAMAP" id="MF_00337">
    <property type="entry name" value="Exonuc_7_S"/>
    <property type="match status" value="1"/>
</dbReference>
<dbReference type="InterPro" id="IPR003761">
    <property type="entry name" value="Exonuc_VII_S"/>
</dbReference>
<dbReference type="InterPro" id="IPR037004">
    <property type="entry name" value="Exonuc_VII_ssu_sf"/>
</dbReference>
<dbReference type="NCBIfam" id="NF002138">
    <property type="entry name" value="PRK00977.1-2"/>
    <property type="match status" value="1"/>
</dbReference>
<dbReference type="NCBIfam" id="TIGR01280">
    <property type="entry name" value="xseB"/>
    <property type="match status" value="1"/>
</dbReference>
<dbReference type="PANTHER" id="PTHR34137">
    <property type="entry name" value="EXODEOXYRIBONUCLEASE 7 SMALL SUBUNIT"/>
    <property type="match status" value="1"/>
</dbReference>
<dbReference type="PANTHER" id="PTHR34137:SF1">
    <property type="entry name" value="EXODEOXYRIBONUCLEASE 7 SMALL SUBUNIT"/>
    <property type="match status" value="1"/>
</dbReference>
<dbReference type="Pfam" id="PF02609">
    <property type="entry name" value="Exonuc_VII_S"/>
    <property type="match status" value="1"/>
</dbReference>
<dbReference type="PIRSF" id="PIRSF006488">
    <property type="entry name" value="Exonuc_VII_S"/>
    <property type="match status" value="1"/>
</dbReference>
<dbReference type="SUPFAM" id="SSF116842">
    <property type="entry name" value="XseB-like"/>
    <property type="match status" value="1"/>
</dbReference>
<keyword id="KW-0963">Cytoplasm</keyword>
<keyword id="KW-0269">Exonuclease</keyword>
<keyword id="KW-0378">Hydrolase</keyword>
<keyword id="KW-0540">Nuclease</keyword>
<reference key="1">
    <citation type="journal article" date="2002" name="Proc. Natl. Acad. Sci. U.S.A.">
        <title>Genome sequence and comparative microarray analysis of serotype M18 group A Streptococcus strains associated with acute rheumatic fever outbreaks.</title>
        <authorList>
            <person name="Smoot J.C."/>
            <person name="Barbian K.D."/>
            <person name="Van Gompel J.J."/>
            <person name="Smoot L.M."/>
            <person name="Chaussee M.S."/>
            <person name="Sylva G.L."/>
            <person name="Sturdevant D.E."/>
            <person name="Ricklefs S.M."/>
            <person name="Porcella S.F."/>
            <person name="Parkins L.D."/>
            <person name="Beres S.B."/>
            <person name="Campbell D.S."/>
            <person name="Smith T.M."/>
            <person name="Zhang Q."/>
            <person name="Kapur V."/>
            <person name="Daly J.A."/>
            <person name="Veasy L.G."/>
            <person name="Musser J.M."/>
        </authorList>
    </citation>
    <scope>NUCLEOTIDE SEQUENCE [LARGE SCALE GENOMIC DNA]</scope>
    <source>
        <strain>MGAS8232</strain>
    </source>
</reference>
<proteinExistence type="inferred from homology"/>
<feature type="chain" id="PRO_0000207021" description="Exodeoxyribonuclease 7 small subunit">
    <location>
        <begin position="1"/>
        <end position="71"/>
    </location>
</feature>
<comment type="function">
    <text evidence="1">Bidirectionally degrades single-stranded DNA into large acid-insoluble oligonucleotides, which are then degraded further into small acid-soluble oligonucleotides.</text>
</comment>
<comment type="catalytic activity">
    <reaction evidence="1">
        <text>Exonucleolytic cleavage in either 5'- to 3'- or 3'- to 5'-direction to yield nucleoside 5'-phosphates.</text>
        <dbReference type="EC" id="3.1.11.6"/>
    </reaction>
</comment>
<comment type="subunit">
    <text evidence="1">Heterooligomer composed of large and small subunits.</text>
</comment>
<comment type="subcellular location">
    <subcellularLocation>
        <location evidence="1">Cytoplasm</location>
    </subcellularLocation>
</comment>
<comment type="similarity">
    <text evidence="1">Belongs to the XseB family.</text>
</comment>
<sequence>MSKTKTFEENLQDLETIVNKLENGDVPLEEAISEFQKGMLLSKELQKTLQAAEKTLVKVMQADGTEVDMDD</sequence>
<accession>P67469</accession>
<accession>Q99YX4</accession>
<organism>
    <name type="scientific">Streptococcus pyogenes serotype M18 (strain MGAS8232)</name>
    <dbReference type="NCBI Taxonomy" id="186103"/>
    <lineage>
        <taxon>Bacteria</taxon>
        <taxon>Bacillati</taxon>
        <taxon>Bacillota</taxon>
        <taxon>Bacilli</taxon>
        <taxon>Lactobacillales</taxon>
        <taxon>Streptococcaceae</taxon>
        <taxon>Streptococcus</taxon>
    </lineage>
</organism>
<gene>
    <name evidence="1" type="primary">xseB</name>
    <name type="ordered locus">spyM18_1517</name>
</gene>